<evidence type="ECO:0000255" key="1">
    <source>
        <dbReference type="HAMAP-Rule" id="MF_01216"/>
    </source>
</evidence>
<reference key="1">
    <citation type="journal article" date="2005" name="J. Bacteriol.">
        <title>Insights on evolution of virulence and resistance from the complete genome analysis of an early methicillin-resistant Staphylococcus aureus strain and a biofilm-producing methicillin-resistant Staphylococcus epidermidis strain.</title>
        <authorList>
            <person name="Gill S.R."/>
            <person name="Fouts D.E."/>
            <person name="Archer G.L."/>
            <person name="Mongodin E.F."/>
            <person name="DeBoy R.T."/>
            <person name="Ravel J."/>
            <person name="Paulsen I.T."/>
            <person name="Kolonay J.F."/>
            <person name="Brinkac L.M."/>
            <person name="Beanan M.J."/>
            <person name="Dodson R.J."/>
            <person name="Daugherty S.C."/>
            <person name="Madupu R."/>
            <person name="Angiuoli S.V."/>
            <person name="Durkin A.S."/>
            <person name="Haft D.H."/>
            <person name="Vamathevan J.J."/>
            <person name="Khouri H."/>
            <person name="Utterback T.R."/>
            <person name="Lee C."/>
            <person name="Dimitrov G."/>
            <person name="Jiang L."/>
            <person name="Qin H."/>
            <person name="Weidman J."/>
            <person name="Tran K."/>
            <person name="Kang K.H."/>
            <person name="Hance I.R."/>
            <person name="Nelson K.E."/>
            <person name="Fraser C.M."/>
        </authorList>
    </citation>
    <scope>NUCLEOTIDE SEQUENCE [LARGE SCALE GENOMIC DNA]</scope>
    <source>
        <strain>COL</strain>
    </source>
</reference>
<feature type="chain" id="PRO_0000166353" description="FMN-dependent NADH:quinone oxidoreductase">
    <location>
        <begin position="1"/>
        <end position="208"/>
    </location>
</feature>
<feature type="binding site" evidence="1">
    <location>
        <begin position="17"/>
        <end position="19"/>
    </location>
    <ligand>
        <name>FMN</name>
        <dbReference type="ChEBI" id="CHEBI:58210"/>
    </ligand>
</feature>
<feature type="binding site" evidence="1">
    <location>
        <begin position="99"/>
        <end position="102"/>
    </location>
    <ligand>
        <name>FMN</name>
        <dbReference type="ChEBI" id="CHEBI:58210"/>
    </ligand>
</feature>
<feature type="binding site" evidence="1">
    <location>
        <begin position="143"/>
        <end position="146"/>
    </location>
    <ligand>
        <name>FMN</name>
        <dbReference type="ChEBI" id="CHEBI:58210"/>
    </ligand>
</feature>
<keyword id="KW-0285">Flavoprotein</keyword>
<keyword id="KW-0288">FMN</keyword>
<keyword id="KW-0520">NAD</keyword>
<keyword id="KW-0560">Oxidoreductase</keyword>
<organism>
    <name type="scientific">Staphylococcus aureus (strain COL)</name>
    <dbReference type="NCBI Taxonomy" id="93062"/>
    <lineage>
        <taxon>Bacteria</taxon>
        <taxon>Bacillati</taxon>
        <taxon>Bacillota</taxon>
        <taxon>Bacilli</taxon>
        <taxon>Bacillales</taxon>
        <taxon>Staphylococcaceae</taxon>
        <taxon>Staphylococcus</taxon>
    </lineage>
</organism>
<name>AZOR_STAAC</name>
<comment type="function">
    <text evidence="1">Quinone reductase that provides resistance to thiol-specific stress caused by electrophilic quinones.</text>
</comment>
<comment type="function">
    <text evidence="1">Also exhibits azoreductase activity. Catalyzes the reductive cleavage of the azo bond in aromatic azo compounds to the corresponding amines.</text>
</comment>
<comment type="catalytic activity">
    <reaction evidence="1">
        <text>2 a quinone + NADH + H(+) = 2 a 1,4-benzosemiquinone + NAD(+)</text>
        <dbReference type="Rhea" id="RHEA:65952"/>
        <dbReference type="ChEBI" id="CHEBI:15378"/>
        <dbReference type="ChEBI" id="CHEBI:57540"/>
        <dbReference type="ChEBI" id="CHEBI:57945"/>
        <dbReference type="ChEBI" id="CHEBI:132124"/>
        <dbReference type="ChEBI" id="CHEBI:134225"/>
    </reaction>
</comment>
<comment type="catalytic activity">
    <reaction evidence="1">
        <text>N,N-dimethyl-1,4-phenylenediamine + anthranilate + 2 NAD(+) = 2-(4-dimethylaminophenyl)diazenylbenzoate + 2 NADH + 2 H(+)</text>
        <dbReference type="Rhea" id="RHEA:55872"/>
        <dbReference type="ChEBI" id="CHEBI:15378"/>
        <dbReference type="ChEBI" id="CHEBI:15783"/>
        <dbReference type="ChEBI" id="CHEBI:16567"/>
        <dbReference type="ChEBI" id="CHEBI:57540"/>
        <dbReference type="ChEBI" id="CHEBI:57945"/>
        <dbReference type="ChEBI" id="CHEBI:71579"/>
        <dbReference type="EC" id="1.7.1.17"/>
    </reaction>
</comment>
<comment type="cofactor">
    <cofactor evidence="1">
        <name>FMN</name>
        <dbReference type="ChEBI" id="CHEBI:58210"/>
    </cofactor>
    <text evidence="1">Binds 1 FMN per subunit.</text>
</comment>
<comment type="subunit">
    <text evidence="1">Homodimer.</text>
</comment>
<comment type="similarity">
    <text evidence="1">Belongs to the azoreductase type 1 family.</text>
</comment>
<accession>Q5HJG8</accession>
<sequence length="208" mass="23353">MAKVLYITAHPFNELVSNSMAAGKAFIETYQQQHPDDEVKHIDLFETYIPVIDKDVLTGWGKMSNGETLTDDEQMKVSRLSDILEEFLSADKYVFVTPMWNLSFPPVVKAYIDAISIAGKTFKYSAEGPQGLLTDKKVLHIQSRGGYYTEGPAADFEMGDRYLRTIMTFLGVPSYETIIIEGHNAEPHKTEEIKATSINNAEKLATTF</sequence>
<gene>
    <name evidence="1" type="primary">azoR</name>
    <name type="ordered locus">SACOL0190</name>
</gene>
<proteinExistence type="inferred from homology"/>
<dbReference type="EC" id="1.6.5.-" evidence="1"/>
<dbReference type="EC" id="1.7.1.17" evidence="1"/>
<dbReference type="EMBL" id="CP000046">
    <property type="protein sequence ID" value="AAW37486.1"/>
    <property type="molecule type" value="Genomic_DNA"/>
</dbReference>
<dbReference type="RefSeq" id="WP_001151451.1">
    <property type="nucleotide sequence ID" value="NZ_JBGOFO010000001.1"/>
</dbReference>
<dbReference type="SMR" id="Q5HJG8"/>
<dbReference type="KEGG" id="sac:SACOL0190"/>
<dbReference type="HOGENOM" id="CLU_088964_3_1_9"/>
<dbReference type="Proteomes" id="UP000000530">
    <property type="component" value="Chromosome"/>
</dbReference>
<dbReference type="GO" id="GO:0009055">
    <property type="term" value="F:electron transfer activity"/>
    <property type="evidence" value="ECO:0007669"/>
    <property type="project" value="UniProtKB-UniRule"/>
</dbReference>
<dbReference type="GO" id="GO:0010181">
    <property type="term" value="F:FMN binding"/>
    <property type="evidence" value="ECO:0007669"/>
    <property type="project" value="UniProtKB-UniRule"/>
</dbReference>
<dbReference type="GO" id="GO:0016652">
    <property type="term" value="F:oxidoreductase activity, acting on NAD(P)H as acceptor"/>
    <property type="evidence" value="ECO:0007669"/>
    <property type="project" value="UniProtKB-UniRule"/>
</dbReference>
<dbReference type="GO" id="GO:0016655">
    <property type="term" value="F:oxidoreductase activity, acting on NAD(P)H, quinone or similar compound as acceptor"/>
    <property type="evidence" value="ECO:0007669"/>
    <property type="project" value="InterPro"/>
</dbReference>
<dbReference type="Gene3D" id="3.40.50.360">
    <property type="match status" value="1"/>
</dbReference>
<dbReference type="HAMAP" id="MF_01216">
    <property type="entry name" value="Azoreductase_type1"/>
    <property type="match status" value="1"/>
</dbReference>
<dbReference type="InterPro" id="IPR003680">
    <property type="entry name" value="Flavodoxin_fold"/>
</dbReference>
<dbReference type="InterPro" id="IPR029039">
    <property type="entry name" value="Flavoprotein-like_sf"/>
</dbReference>
<dbReference type="InterPro" id="IPR050104">
    <property type="entry name" value="FMN-dep_NADH:Q_OxRdtase_AzoR1"/>
</dbReference>
<dbReference type="InterPro" id="IPR023048">
    <property type="entry name" value="NADH:quinone_OxRdtase_FMN_depd"/>
</dbReference>
<dbReference type="NCBIfam" id="NF010075">
    <property type="entry name" value="PRK13556.1"/>
    <property type="match status" value="1"/>
</dbReference>
<dbReference type="PANTHER" id="PTHR43741">
    <property type="entry name" value="FMN-DEPENDENT NADH-AZOREDUCTASE 1"/>
    <property type="match status" value="1"/>
</dbReference>
<dbReference type="PANTHER" id="PTHR43741:SF7">
    <property type="entry name" value="FMN-DEPENDENT NADH:QUINONE OXIDOREDUCTASE"/>
    <property type="match status" value="1"/>
</dbReference>
<dbReference type="Pfam" id="PF02525">
    <property type="entry name" value="Flavodoxin_2"/>
    <property type="match status" value="1"/>
</dbReference>
<dbReference type="SUPFAM" id="SSF52218">
    <property type="entry name" value="Flavoproteins"/>
    <property type="match status" value="1"/>
</dbReference>
<protein>
    <recommendedName>
        <fullName evidence="1">FMN-dependent NADH:quinone oxidoreductase</fullName>
        <ecNumber evidence="1">1.6.5.-</ecNumber>
    </recommendedName>
    <alternativeName>
        <fullName evidence="1">Azo-dye reductase</fullName>
    </alternativeName>
    <alternativeName>
        <fullName evidence="1">FMN-dependent NADH-azo compound oxidoreductase</fullName>
    </alternativeName>
    <alternativeName>
        <fullName evidence="1">FMN-dependent NADH-azoreductase</fullName>
        <ecNumber evidence="1">1.7.1.17</ecNumber>
    </alternativeName>
</protein>